<proteinExistence type="evidence at protein level"/>
<keyword id="KW-0002">3D-structure</keyword>
<keyword id="KW-0007">Acetylation</keyword>
<keyword id="KW-0025">Alternative splicing</keyword>
<keyword id="KW-0968">Cytoplasmic vesicle</keyword>
<keyword id="KW-0256">Endoplasmic reticulum</keyword>
<keyword id="KW-0945">Host-virus interaction</keyword>
<keyword id="KW-0551">Lipid droplet</keyword>
<keyword id="KW-0472">Membrane</keyword>
<keyword id="KW-0597">Phosphoprotein</keyword>
<keyword id="KW-1267">Proteomics identification</keyword>
<keyword id="KW-1185">Reference proteome</keyword>
<keyword id="KW-0832">Ubl conjugation</keyword>
<sequence length="410" mass="45787">MELPSGPGPERLFDSHRLPGDCFLLLVLLLYAPVGFCLLVLRLFLGIHVFLVSCALPDSVLRRFVVRTMCAVLGLVARQEDSGLRDHSVRVLISNHVTPFDHNIVNLLTTCSTPLLNSPPSFVCWSRGFMEMNGRGELVESLKRFCASTRLPPTPLLLFPEEEATNGREGLLRFSSWPFSIQDVVQPLTLQVQRPLVSVTVSDASWVSELLWSLFVPFTVYQVRWLRPVHRQLGEANEEFALRVQQLVAKELGQTGTRLTPADKAEHMKRQRHPRLRPQSAQSSFPPSPGPSPDVQLATLAQRVKEVLPHVPLGVIQRDLAKTGCVDLTITNLLEGAVAFMPEDITKGTQSLPTASASKFPSSGPVTPQPTALTFAKSSWARQESLQERKQALYEYARRRFTERRAQEAD</sequence>
<feature type="chain" id="PRO_0000020765" description="Lipid droplet-regulating VLDL assembly factor AUP1">
    <location>
        <begin position="1"/>
        <end position="410"/>
    </location>
</feature>
<feature type="topological domain" description="Cytoplasmic" evidence="14 15">
    <location>
        <begin position="1"/>
        <end position="20"/>
    </location>
</feature>
<feature type="intramembrane region" evidence="14 15">
    <location>
        <begin position="21"/>
        <end position="41"/>
    </location>
</feature>
<feature type="topological domain" description="Cytoplasmic" evidence="14 15">
    <location>
        <begin position="42"/>
        <end position="410"/>
    </location>
</feature>
<feature type="domain" description="CUE" evidence="1">
    <location>
        <begin position="296"/>
        <end position="338"/>
    </location>
</feature>
<feature type="region of interest" description="Disordered" evidence="2">
    <location>
        <begin position="255"/>
        <end position="295"/>
    </location>
</feature>
<feature type="region of interest" description="Disordered" evidence="2">
    <location>
        <begin position="350"/>
        <end position="369"/>
    </location>
</feature>
<feature type="modified residue" description="N-acetylmethionine" evidence="20 21">
    <location>
        <position position="1"/>
    </location>
</feature>
<feature type="modified residue" description="Phosphoserine" evidence="22">
    <location>
        <position position="5"/>
    </location>
</feature>
<feature type="modified residue" description="Phosphoserine" evidence="17 18 19 22">
    <location>
        <position position="288"/>
    </location>
</feature>
<feature type="modified residue" description="Phosphoserine" evidence="17">
    <location>
        <position position="292"/>
    </location>
</feature>
<feature type="modified residue" description="Phosphoserine" evidence="17">
    <location>
        <position position="363"/>
    </location>
</feature>
<feature type="modified residue" description="Phosphothreonine" evidence="17 18 22">
    <location>
        <position position="367"/>
    </location>
</feature>
<feature type="splice variant" id="VSP_059683" description="In isoform 2.">
    <original>FPSSGPVTPQPTAL</original>
    <variation>AFDACLMMMTPQAL</variation>
    <location>
        <begin position="360"/>
        <end position="373"/>
    </location>
</feature>
<feature type="splice variant" id="VSP_059684" description="In isoform 2.">
    <location>
        <begin position="374"/>
        <end position="410"/>
    </location>
</feature>
<feature type="mutagenesis site" description="Disrupts topology with the N-terminus in the lumen instead of the cytoplasm. Abolishes lipid droplet localization and lipid droplet clustering." evidence="7 9">
    <original>PVG</original>
    <variation>LLL</variation>
    <location>
        <begin position="33"/>
        <end position="35"/>
    </location>
</feature>
<feature type="mutagenesis site" description="Abolishes lipid droplet localization." evidence="7">
    <original>R</original>
    <variation>I</variation>
    <location>
        <position position="42"/>
    </location>
</feature>
<feature type="mutagenesis site" description="Does not affect lipid droplet localization." evidence="7">
    <original>D</original>
    <variation>I</variation>
    <location>
        <position position="58"/>
    </location>
</feature>
<feature type="mutagenesis site" description="Abolishes lipid droplet localization." evidence="7">
    <original>RR</original>
    <variation>FF</variation>
    <location>
        <begin position="62"/>
        <end position="63"/>
    </location>
</feature>
<feature type="mutagenesis site" description="Reduced formation of lipid droplets." evidence="6">
    <original>H</original>
    <variation>A</variation>
    <location>
        <position position="96"/>
    </location>
</feature>
<feature type="mutagenesis site" description="Reduced interaction with ER quality control machinery and misfolded substrates; when associated with 333-L-L-334 Del." evidence="6">
    <original>EVL</original>
    <variation>KAA</variation>
    <location>
        <begin position="306"/>
        <end position="308"/>
    </location>
</feature>
<feature type="mutagenesis site" description="Reduced lipid droplet clustering." evidence="9">
    <original>VLP</original>
    <variation>GGR</variation>
    <location>
        <begin position="307"/>
        <end position="309"/>
    </location>
</feature>
<feature type="mutagenesis site" description="Reduced lipid droplet clustering; when associated with 319-V-E-320 and 333-E-D-334." evidence="9">
    <original>I</original>
    <variation>R</variation>
    <location>
        <position position="316"/>
    </location>
</feature>
<feature type="mutagenesis site" description="Reduced lipid droplet clustering; when associated with R-316 and 333-E-D-334." evidence="9">
    <original>DL</original>
    <variation>VE</variation>
    <location>
        <begin position="319"/>
        <end position="320"/>
    </location>
</feature>
<feature type="mutagenesis site" description="Reduced lipid droplet clustering." evidence="9">
    <original>TI</original>
    <variation>AD</variation>
    <location>
        <begin position="329"/>
        <end position="330"/>
    </location>
</feature>
<feature type="mutagenesis site" description="Reduced lipid droplet clustering; when associated with R-316 and 319-V-E-320." evidence="9">
    <original>LL</original>
    <variation>ED</variation>
    <location>
        <begin position="333"/>
        <end position="334"/>
    </location>
</feature>
<feature type="mutagenesis site" description="Reduced interaction with ER quality control machinery and misfolded substrates; when associated with 306-K--A-308." evidence="6">
    <location>
        <begin position="333"/>
        <end position="334"/>
    </location>
</feature>
<feature type="mutagenesis site" description="Significantly reduced interaction with UBE2G2." evidence="8">
    <original>R</original>
    <variation>A</variation>
    <location>
        <position position="382"/>
    </location>
</feature>
<feature type="mutagenesis site" description="Significantly reduced interaction with UBE2G2." evidence="8">
    <original>Q</original>
    <variation>A</variation>
    <location>
        <position position="383"/>
    </location>
</feature>
<feature type="mutagenesis site" description="No effect on interaction with UBE2G2." evidence="8">
    <original>E</original>
    <variation>A</variation>
    <location>
        <position position="384"/>
    </location>
</feature>
<feature type="mutagenesis site" description="Abolishes interaction with UBE2G2." evidence="8">
    <original>L</original>
    <variation>A</variation>
    <location>
        <position position="386"/>
    </location>
</feature>
<feature type="mutagenesis site" description="No effect on interaction with UBE2G2." evidence="8">
    <original>E</original>
    <variation>A</variation>
    <location>
        <position position="388"/>
    </location>
</feature>
<feature type="mutagenesis site" description="Significantly reduced interaction with UBE2G2." evidence="8">
    <original>R</original>
    <variation>A</variation>
    <location>
        <position position="389"/>
    </location>
</feature>
<feature type="mutagenesis site" description="Abolishes interaction with UBE2G2." evidence="8">
    <original>K</original>
    <variation>A</variation>
    <location>
        <position position="390"/>
    </location>
</feature>
<feature type="mutagenesis site" description="Abolishes interaction with UBE2G2." evidence="8">
    <original>L</original>
    <variation>A</variation>
    <location>
        <position position="393"/>
    </location>
</feature>
<feature type="mutagenesis site" description="Abolishes interaction with UBE2G2." evidence="5">
    <original>ARRRFT</original>
    <variation>EGREDA</variation>
    <location>
        <begin position="397"/>
        <end position="402"/>
    </location>
</feature>
<feature type="mutagenesis site" description="Significantly reduced interaction with UBE2G2." evidence="8">
    <original>R</original>
    <variation>A</variation>
    <location>
        <position position="398"/>
    </location>
</feature>
<feature type="mutagenesis site" description="No effect on interaction with UBE2G2." evidence="8">
    <original>R</original>
    <variation>A</variation>
    <location>
        <position position="399"/>
    </location>
</feature>
<feature type="mutagenesis site" description="Abolishes interaction with UBE2G2." evidence="8">
    <original>R</original>
    <variation>A</variation>
    <location>
        <position position="400"/>
    </location>
</feature>
<feature type="mutagenesis site" description="Abolishes interaction with UBE2G2." evidence="8">
    <original>R</original>
    <variation>A</variation>
    <location>
        <position position="404"/>
    </location>
</feature>
<feature type="mutagenesis site" description="Significantly reduced interaction with UBE2G2." evidence="8">
    <original>E</original>
    <variation>A</variation>
    <location>
        <position position="408"/>
    </location>
</feature>
<feature type="mutagenesis site" description="No effect on interaction with UBE2G2." evidence="8">
    <original>D</original>
    <variation>A</variation>
    <location>
        <position position="410"/>
    </location>
</feature>
<feature type="sequence conflict" description="In Ref. 3; AAD43010." evidence="13" ref="3">
    <original>S</original>
    <variation>P</variation>
    <location>
        <position position="288"/>
    </location>
</feature>
<feature type="helix" evidence="23">
    <location>
        <begin position="297"/>
        <end position="307"/>
    </location>
</feature>
<feature type="strand" evidence="23">
    <location>
        <begin position="309"/>
        <end position="311"/>
    </location>
</feature>
<feature type="helix" evidence="23">
    <location>
        <begin position="313"/>
        <end position="321"/>
    </location>
</feature>
<feature type="helix" evidence="23">
    <location>
        <begin position="326"/>
        <end position="334"/>
    </location>
</feature>
<feature type="helix" evidence="24">
    <location>
        <begin position="379"/>
        <end position="402"/>
    </location>
</feature>
<name>AUP1_HUMAN</name>
<evidence type="ECO:0000255" key="1">
    <source>
        <dbReference type="PROSITE-ProRule" id="PRU00468"/>
    </source>
</evidence>
<evidence type="ECO:0000256" key="2">
    <source>
        <dbReference type="SAM" id="MobiDB-lite"/>
    </source>
</evidence>
<evidence type="ECO:0000269" key="3">
    <source>
    </source>
</evidence>
<evidence type="ECO:0000269" key="4">
    <source>
    </source>
</evidence>
<evidence type="ECO:0000269" key="5">
    <source>
    </source>
</evidence>
<evidence type="ECO:0000269" key="6">
    <source>
    </source>
</evidence>
<evidence type="ECO:0000269" key="7">
    <source>
    </source>
</evidence>
<evidence type="ECO:0000269" key="8">
    <source>
    </source>
</evidence>
<evidence type="ECO:0000269" key="9">
    <source>
    </source>
</evidence>
<evidence type="ECO:0000269" key="10">
    <source>
    </source>
</evidence>
<evidence type="ECO:0000269" key="11">
    <source>
    </source>
</evidence>
<evidence type="ECO:0000303" key="12">
    <source>
    </source>
</evidence>
<evidence type="ECO:0000305" key="13"/>
<evidence type="ECO:0000305" key="14">
    <source>
    </source>
</evidence>
<evidence type="ECO:0000305" key="15">
    <source>
    </source>
</evidence>
<evidence type="ECO:0000312" key="16">
    <source>
        <dbReference type="HGNC" id="HGNC:891"/>
    </source>
</evidence>
<evidence type="ECO:0007744" key="17">
    <source>
    </source>
</evidence>
<evidence type="ECO:0007744" key="18">
    <source>
    </source>
</evidence>
<evidence type="ECO:0007744" key="19">
    <source>
    </source>
</evidence>
<evidence type="ECO:0007744" key="20">
    <source>
    </source>
</evidence>
<evidence type="ECO:0007744" key="21">
    <source>
    </source>
</evidence>
<evidence type="ECO:0007744" key="22">
    <source>
    </source>
</evidence>
<evidence type="ECO:0007829" key="23">
    <source>
        <dbReference type="PDB" id="2EKF"/>
    </source>
</evidence>
<evidence type="ECO:0007829" key="24">
    <source>
        <dbReference type="PDB" id="7LEW"/>
    </source>
</evidence>
<gene>
    <name evidence="16" type="primary">AUP1</name>
</gene>
<comment type="function">
    <text evidence="4 5 6 8 9 10">Plays a role in the translocation of terminally misfolded proteins from the endoplasmic reticulum lumen to the cytoplasm and their degradation by the proteasome (PubMed:18711132, PubMed:21857022). Plays a role in lipid droplet formation (PubMed:21857022). Induces lipid droplet clustering (PubMed:24039768). Recruits ubiquitin-conjugating enzyme UBE2G2 to lipid droplets which facilitates its interaction with ubiquitin ligases AMFR/gp78 and RNF139/TRC8, leading to sterol-induced ubiquitination of HMGCR and its subsequent proteasomal degradation (PubMed:21127063, PubMed:23223569). Also required for the degradation of INSIG1, SREBF1 and SREBF2 (PubMed:23223569). Plays a role in regulating assembly and secretion of very low density lipoprotein particles and stability of apolipoprotein APOB (PubMed:28183703).</text>
</comment>
<comment type="function">
    <text evidence="11">(Microbial infection) Following Dengue virus infection, required for induction of lipophagy which facilitates production of virus progeny particles.</text>
</comment>
<comment type="subunit">
    <text evidence="3 4 5 8 10">Identified in a complex that contains SEL1L, OS9, FAF2/UBXD8, UBE2J1/UBC6E and AUP1 (PubMed:18711132). Interacts with the cytoplasmic tail of ITGA2B, ITGA1, ITGA2, ITGA5, ITGAV and ITGAM (PubMed:12042322). Interacts (via C-terminus) with ubiquitin-conjugating enzyme UBE2G2; the interaction recruits UBE2G2 to lipid droplets (PubMed:21127063, PubMed:23223569). Interacts with ubiquitin ligases AMFR/gp78 and RNF139/TRC8; this promotes interaction of UBE2G2 with AMFR and RNF139 (PubMed:23223569). Interacts with apolipoprotein APOB (PubMed:28183703).</text>
</comment>
<comment type="subunit">
    <text evidence="11">(Microbial infection) Interacts with Dengue virus NS4A; the interaction occurs in the presence of Dengue virus NS4B and induces lipophagy which facilitates production of virus progeny.</text>
</comment>
<comment type="interaction">
    <interactant intactId="EBI-1058701">
        <id>Q9Y679</id>
    </interactant>
    <interactant intactId="EBI-2624570">
        <id>P35372</id>
        <label>OPRM1</label>
    </interactant>
    <organismsDiffer>false</organismsDiffer>
    <experiments>4</experiments>
</comment>
<comment type="interaction">
    <interactant intactId="EBI-1058701">
        <id>Q9Y679</id>
    </interactant>
    <interactant intactId="EBI-1051028">
        <id>P60604</id>
        <label>UBE2G2</label>
    </interactant>
    <organismsDiffer>false</organismsDiffer>
    <experiments>6</experiments>
</comment>
<comment type="subcellular location">
    <subcellularLocation>
        <location evidence="3 4 5 6 7 8">Endoplasmic reticulum membrane</location>
        <topology evidence="5 7">Peripheral membrane protein</topology>
    </subcellularLocation>
    <subcellularLocation>
        <location evidence="5 6 7 8 10 11">Lipid droplet</location>
    </subcellularLocation>
</comment>
<comment type="subcellular location">
    <subcellularLocation>
        <location evidence="11">Cytoplasmic vesicle</location>
        <location evidence="11">Autophagosome</location>
    </subcellularLocation>
    <text evidence="11">(Microbial infection) Upon Dengue virus infection, relocates from lipid droplets to autophagosomes.</text>
</comment>
<comment type="alternative products">
    <event type="alternative splicing"/>
    <isoform>
        <id>Q9Y679-2</id>
        <name>1</name>
        <sequence type="displayed"/>
    </isoform>
    <isoform>
        <id>Q9Y679-3</id>
        <name>2</name>
        <sequence type="described" ref="VSP_059683 VSP_059684"/>
    </isoform>
</comment>
<comment type="tissue specificity">
    <text evidence="3">Detected in blood platelets and leukocytes (at protein level). Ubiquitous. Highly expressed in placenta, liver, kidney, skeletal muscle, heart and brain.</text>
</comment>
<comment type="induction">
    <text evidence="11">(Microbial infection) By Dengue virus infection (at protein level).</text>
</comment>
<comment type="domain">
    <text evidence="6 8 9">The CUE domain is required for interaction with the ER quality control machinery and misfolded substrates, ubiquitination, lipid clustering and interaction with AMFR but is not required for localization to lipid droplets.</text>
</comment>
<comment type="PTM">
    <text evidence="6 9 11">Monoubiquitinated and diubiquitinated.</text>
</comment>
<comment type="PTM">
    <text evidence="11">(Microbial infection) Not ubiquitinated following Dengue virus infection.</text>
</comment>
<comment type="similarity">
    <text evidence="13">Belongs to the AUP1 family.</text>
</comment>
<comment type="sequence caution" evidence="13">
    <conflict type="frameshift">
        <sequence resource="EMBL-CDS" id="AAD43018"/>
    </conflict>
</comment>
<comment type="sequence caution" evidence="13">
    <conflict type="erroneous initiation">
        <sequence resource="EMBL-CDS" id="AAH33646"/>
    </conflict>
    <text>Extended N-terminus.</text>
</comment>
<dbReference type="EMBL" id="AF100754">
    <property type="protein sequence ID" value="AAD43018.1"/>
    <property type="status" value="ALT_FRAME"/>
    <property type="molecule type" value="mRNA"/>
</dbReference>
<dbReference type="EMBL" id="AF100753">
    <property type="protein sequence ID" value="AAD43017.1"/>
    <property type="molecule type" value="mRNA"/>
</dbReference>
<dbReference type="EMBL" id="AF100746">
    <property type="protein sequence ID" value="AAD43010.1"/>
    <property type="molecule type" value="mRNA"/>
</dbReference>
<dbReference type="EMBL" id="AF165515">
    <property type="protein sequence ID" value="AAF86645.1"/>
    <property type="molecule type" value="mRNA"/>
</dbReference>
<dbReference type="EMBL" id="AK023983">
    <property type="protein sequence ID" value="BAB14753.1"/>
    <property type="molecule type" value="mRNA"/>
</dbReference>
<dbReference type="EMBL" id="CH471053">
    <property type="protein sequence ID" value="EAW99623.1"/>
    <property type="molecule type" value="Genomic_DNA"/>
</dbReference>
<dbReference type="EMBL" id="BC001658">
    <property type="protein sequence ID" value="AAH01658.1"/>
    <property type="molecule type" value="mRNA"/>
</dbReference>
<dbReference type="EMBL" id="BC033646">
    <property type="protein sequence ID" value="AAH33646.2"/>
    <property type="status" value="ALT_INIT"/>
    <property type="molecule type" value="mRNA"/>
</dbReference>
<dbReference type="CCDS" id="CCDS42702.1">
    <molecule id="Q9Y679-2"/>
</dbReference>
<dbReference type="RefSeq" id="NP_853553.1">
    <molecule id="Q9Y679-2"/>
    <property type="nucleotide sequence ID" value="NM_181575.5"/>
</dbReference>
<dbReference type="RefSeq" id="XP_054198661.1">
    <molecule id="Q9Y679-3"/>
    <property type="nucleotide sequence ID" value="XM_054342686.1"/>
</dbReference>
<dbReference type="PDB" id="2EKF">
    <property type="method" value="NMR"/>
    <property type="chains" value="A=292-345"/>
</dbReference>
<dbReference type="PDB" id="7LEW">
    <property type="method" value="X-ray"/>
    <property type="resolution" value="1.74 A"/>
    <property type="chains" value="B=379-410"/>
</dbReference>
<dbReference type="PDBsum" id="2EKF"/>
<dbReference type="PDBsum" id="7LEW"/>
<dbReference type="SMR" id="Q9Y679"/>
<dbReference type="BioGRID" id="107031">
    <property type="interactions" value="289"/>
</dbReference>
<dbReference type="CORUM" id="Q9Y679"/>
<dbReference type="FunCoup" id="Q9Y679">
    <property type="interactions" value="1747"/>
</dbReference>
<dbReference type="IntAct" id="Q9Y679">
    <property type="interactions" value="107"/>
</dbReference>
<dbReference type="MINT" id="Q9Y679"/>
<dbReference type="STRING" id="9606.ENSP00000366748"/>
<dbReference type="TCDB" id="8.A.183.2.1">
    <property type="family name" value="the rela-associated inhibitor (rai) family"/>
</dbReference>
<dbReference type="iPTMnet" id="Q9Y679"/>
<dbReference type="PhosphoSitePlus" id="Q9Y679"/>
<dbReference type="SwissPalm" id="Q9Y679"/>
<dbReference type="BioMuta" id="AUP1"/>
<dbReference type="DMDM" id="12643958"/>
<dbReference type="jPOST" id="Q9Y679"/>
<dbReference type="MassIVE" id="Q9Y679"/>
<dbReference type="PaxDb" id="9606-ENSP00000366748"/>
<dbReference type="PeptideAtlas" id="Q9Y679"/>
<dbReference type="ProteomicsDB" id="86617">
    <molecule id="Q9Y679-2"/>
</dbReference>
<dbReference type="ProteomicsDB" id="86618">
    <molecule id="Q9Y679-3"/>
</dbReference>
<dbReference type="Pumba" id="Q9Y679"/>
<dbReference type="Antibodypedia" id="2357">
    <property type="antibodies" value="195 antibodies from 28 providers"/>
</dbReference>
<dbReference type="DNASU" id="550"/>
<dbReference type="Ensembl" id="ENST00000377526.4">
    <molecule id="Q9Y679-2"/>
    <property type="protein sequence ID" value="ENSP00000366748.3"/>
    <property type="gene ID" value="ENSG00000115307.17"/>
</dbReference>
<dbReference type="Ensembl" id="ENST00000425118.5">
    <molecule id="Q9Y679-3"/>
    <property type="protein sequence ID" value="ENSP00000403430.1"/>
    <property type="gene ID" value="ENSG00000115307.17"/>
</dbReference>
<dbReference type="GeneID" id="550"/>
<dbReference type="KEGG" id="hsa:550"/>
<dbReference type="MANE-Select" id="ENST00000377526.4">
    <property type="protein sequence ID" value="ENSP00000366748.3"/>
    <property type="RefSeq nucleotide sequence ID" value="NM_181575.5"/>
    <property type="RefSeq protein sequence ID" value="NP_853553.1"/>
</dbReference>
<dbReference type="UCSC" id="uc002smf.4">
    <molecule id="Q9Y679-2"/>
    <property type="organism name" value="human"/>
</dbReference>
<dbReference type="AGR" id="HGNC:891"/>
<dbReference type="CTD" id="550"/>
<dbReference type="DisGeNET" id="550"/>
<dbReference type="GeneCards" id="AUP1"/>
<dbReference type="HGNC" id="HGNC:891">
    <property type="gene designation" value="AUP1"/>
</dbReference>
<dbReference type="HPA" id="ENSG00000115307">
    <property type="expression patterns" value="Low tissue specificity"/>
</dbReference>
<dbReference type="MalaCards" id="AUP1"/>
<dbReference type="MIM" id="602434">
    <property type="type" value="gene"/>
</dbReference>
<dbReference type="neXtProt" id="NX_Q9Y679"/>
<dbReference type="OpenTargets" id="ENSG00000115307"/>
<dbReference type="PharmGKB" id="PA25182"/>
<dbReference type="VEuPathDB" id="HostDB:ENSG00000115307"/>
<dbReference type="GeneTree" id="ENSGT00390000016110"/>
<dbReference type="HOGENOM" id="CLU_045696_0_0_1"/>
<dbReference type="InParanoid" id="Q9Y679"/>
<dbReference type="OMA" id="KFNSWPF"/>
<dbReference type="OrthoDB" id="1854593at2759"/>
<dbReference type="PAN-GO" id="Q9Y679">
    <property type="GO annotations" value="6 GO annotations based on evolutionary models"/>
</dbReference>
<dbReference type="PhylomeDB" id="Q9Y679"/>
<dbReference type="TreeFam" id="TF313372"/>
<dbReference type="PathwayCommons" id="Q9Y679"/>
<dbReference type="SignaLink" id="Q9Y679"/>
<dbReference type="BioGRID-ORCS" id="550">
    <property type="hits" value="63 hits in 1162 CRISPR screens"/>
</dbReference>
<dbReference type="ChiTaRS" id="AUP1">
    <property type="organism name" value="human"/>
</dbReference>
<dbReference type="EvolutionaryTrace" id="Q9Y679"/>
<dbReference type="GeneWiki" id="AUP1"/>
<dbReference type="GenomeRNAi" id="550"/>
<dbReference type="Pharos" id="Q9Y679">
    <property type="development level" value="Tbio"/>
</dbReference>
<dbReference type="PRO" id="PR:Q9Y679"/>
<dbReference type="Proteomes" id="UP000005640">
    <property type="component" value="Chromosome 2"/>
</dbReference>
<dbReference type="RNAct" id="Q9Y679">
    <property type="molecule type" value="protein"/>
</dbReference>
<dbReference type="Bgee" id="ENSG00000115307">
    <property type="expression patterns" value="Expressed in granulocyte and 200 other cell types or tissues"/>
</dbReference>
<dbReference type="GO" id="GO:0005776">
    <property type="term" value="C:autophagosome"/>
    <property type="evidence" value="ECO:0000314"/>
    <property type="project" value="UniProtKB"/>
</dbReference>
<dbReference type="GO" id="GO:0031410">
    <property type="term" value="C:cytoplasmic vesicle"/>
    <property type="evidence" value="ECO:0007669"/>
    <property type="project" value="UniProtKB-KW"/>
</dbReference>
<dbReference type="GO" id="GO:0005783">
    <property type="term" value="C:endoplasmic reticulum"/>
    <property type="evidence" value="ECO:0000314"/>
    <property type="project" value="UniProtKB"/>
</dbReference>
<dbReference type="GO" id="GO:0005789">
    <property type="term" value="C:endoplasmic reticulum membrane"/>
    <property type="evidence" value="ECO:0000314"/>
    <property type="project" value="UniProtKB"/>
</dbReference>
<dbReference type="GO" id="GO:0070062">
    <property type="term" value="C:extracellular exosome"/>
    <property type="evidence" value="ECO:0007005"/>
    <property type="project" value="UniProtKB"/>
</dbReference>
<dbReference type="GO" id="GO:0005811">
    <property type="term" value="C:lipid droplet"/>
    <property type="evidence" value="ECO:0000314"/>
    <property type="project" value="UniProtKB"/>
</dbReference>
<dbReference type="GO" id="GO:0016020">
    <property type="term" value="C:membrane"/>
    <property type="evidence" value="ECO:0007005"/>
    <property type="project" value="UniProtKB"/>
</dbReference>
<dbReference type="GO" id="GO:0043130">
    <property type="term" value="F:ubiquitin binding"/>
    <property type="evidence" value="ECO:0007669"/>
    <property type="project" value="InterPro"/>
</dbReference>
<dbReference type="GO" id="GO:0031624">
    <property type="term" value="F:ubiquitin conjugating enzyme binding"/>
    <property type="evidence" value="ECO:0000353"/>
    <property type="project" value="UniProtKB"/>
</dbReference>
<dbReference type="GO" id="GO:0031625">
    <property type="term" value="F:ubiquitin protein ligase binding"/>
    <property type="evidence" value="ECO:0000353"/>
    <property type="project" value="UniProtKB"/>
</dbReference>
<dbReference type="GO" id="GO:0036503">
    <property type="term" value="P:ERAD pathway"/>
    <property type="evidence" value="ECO:0000315"/>
    <property type="project" value="UniProtKB"/>
</dbReference>
<dbReference type="GO" id="GO:0140042">
    <property type="term" value="P:lipid droplet formation"/>
    <property type="evidence" value="ECO:0000315"/>
    <property type="project" value="UniProtKB"/>
</dbReference>
<dbReference type="GO" id="GO:0034389">
    <property type="term" value="P:lipid droplet organization"/>
    <property type="evidence" value="ECO:0000314"/>
    <property type="project" value="UniProtKB"/>
</dbReference>
<dbReference type="GO" id="GO:0061724">
    <property type="term" value="P:lipophagy"/>
    <property type="evidence" value="ECO:0000315"/>
    <property type="project" value="UniProtKB"/>
</dbReference>
<dbReference type="GO" id="GO:1990044">
    <property type="term" value="P:protein localization to lipid droplet"/>
    <property type="evidence" value="ECO:0000314"/>
    <property type="project" value="UniProtKB"/>
</dbReference>
<dbReference type="GO" id="GO:0009615">
    <property type="term" value="P:response to virus"/>
    <property type="evidence" value="ECO:0000315"/>
    <property type="project" value="UniProtKB"/>
</dbReference>
<dbReference type="GO" id="GO:0030970">
    <property type="term" value="P:retrograde protein transport, ER to cytosol"/>
    <property type="evidence" value="ECO:0000315"/>
    <property type="project" value="ParkinsonsUK-UCL"/>
</dbReference>
<dbReference type="CDD" id="cd14420">
    <property type="entry name" value="CUE_AUP1"/>
    <property type="match status" value="1"/>
</dbReference>
<dbReference type="FunFam" id="1.10.8.10:FF:000049">
    <property type="entry name" value="ancient ubiquitous protein 1 isoform X2"/>
    <property type="match status" value="1"/>
</dbReference>
<dbReference type="Gene3D" id="1.10.8.10">
    <property type="entry name" value="DNA helicase RuvA subunit, C-terminal domain"/>
    <property type="match status" value="1"/>
</dbReference>
<dbReference type="InterPro" id="IPR048056">
    <property type="entry name" value="AUP1_CUE"/>
</dbReference>
<dbReference type="InterPro" id="IPR003892">
    <property type="entry name" value="CUE"/>
</dbReference>
<dbReference type="PANTHER" id="PTHR15486">
    <property type="entry name" value="ANCIENT UBIQUITOUS PROTEIN"/>
    <property type="match status" value="1"/>
</dbReference>
<dbReference type="PANTHER" id="PTHR15486:SF96">
    <property type="entry name" value="LIPID DROPLET-REGULATING VLDL ASSEMBLY FACTOR AUP1"/>
    <property type="match status" value="1"/>
</dbReference>
<dbReference type="Pfam" id="PF02845">
    <property type="entry name" value="CUE"/>
    <property type="match status" value="1"/>
</dbReference>
<dbReference type="SMART" id="SM00546">
    <property type="entry name" value="CUE"/>
    <property type="match status" value="1"/>
</dbReference>
<dbReference type="SUPFAM" id="SSF69593">
    <property type="entry name" value="Glycerol-3-phosphate (1)-acyltransferase"/>
    <property type="match status" value="1"/>
</dbReference>
<dbReference type="PROSITE" id="PS51140">
    <property type="entry name" value="CUE"/>
    <property type="match status" value="1"/>
</dbReference>
<accession>Q9Y679</accession>
<accession>C0H5W8</accession>
<accession>Q9H866</accession>
<accession>Q9UNQ6</accession>
<accession>Q9Y685</accession>
<reference key="1">
    <citation type="submission" date="1998-10" db="EMBL/GenBank/DDBJ databases">
        <title>Human ancient ubiquitous protein AUP1 isoform gene.</title>
        <authorList>
            <person name="Peng Y."/>
            <person name="Song H."/>
            <person name="Dai M."/>
            <person name="Huang Q."/>
            <person name="Mao Y."/>
            <person name="Zhang Q."/>
            <person name="Mao M."/>
            <person name="Fu G."/>
            <person name="Luo M."/>
            <person name="Chen J."/>
            <person name="Hu R."/>
        </authorList>
    </citation>
    <scope>NUCLEOTIDE SEQUENCE [MRNA] (ISOFORM 1)</scope>
    <source>
        <tissue>Pituitary</tissue>
    </source>
</reference>
<reference key="2">
    <citation type="journal article" date="2000" name="Genome Res.">
        <title>Cloning and functional analysis of cDNAs with open reading frames for 300 previously undefined genes expressed in CD34+ hematopoietic stem/progenitor cells.</title>
        <authorList>
            <person name="Zhang Q.-H."/>
            <person name="Ye M."/>
            <person name="Wu X.-Y."/>
            <person name="Ren S.-X."/>
            <person name="Zhao M."/>
            <person name="Zhao C.-J."/>
            <person name="Fu G."/>
            <person name="Shen Y."/>
            <person name="Fan H.-Y."/>
            <person name="Lu G."/>
            <person name="Zhong M."/>
            <person name="Xu X.-R."/>
            <person name="Han Z.-G."/>
            <person name="Zhang J.-W."/>
            <person name="Tao J."/>
            <person name="Huang Q.-H."/>
            <person name="Zhou J."/>
            <person name="Hu G.-X."/>
            <person name="Gu J."/>
            <person name="Chen S.-J."/>
            <person name="Chen Z."/>
        </authorList>
    </citation>
    <scope>NUCLEOTIDE SEQUENCE [LARGE SCALE MRNA] (ISOFORM 1)</scope>
    <source>
        <tissue>Umbilical cord blood</tissue>
    </source>
</reference>
<reference key="3">
    <citation type="submission" date="1999-07" db="EMBL/GenBank/DDBJ databases">
        <title>Novel genes expressed in hematopoietic stem/progenitor cells from myelodysplastic syndrome patients.</title>
        <authorList>
            <person name="Gu J."/>
            <person name="Huang Q."/>
            <person name="Yu Y."/>
            <person name="Xu S."/>
            <person name="Han Z."/>
            <person name="Fu G."/>
            <person name="Zhou J."/>
            <person name="Wang Y."/>
            <person name="Huang C."/>
            <person name="Ren S."/>
            <person name="Tu Y."/>
            <person name="Chen Z."/>
        </authorList>
    </citation>
    <scope>NUCLEOTIDE SEQUENCE [LARGE SCALE MRNA] (ISOFORM 1)</scope>
    <source>
        <tissue>Hematopoietic stem cell</tissue>
    </source>
</reference>
<reference key="4">
    <citation type="journal article" date="2004" name="Nat. Genet.">
        <title>Complete sequencing and characterization of 21,243 full-length human cDNAs.</title>
        <authorList>
            <person name="Ota T."/>
            <person name="Suzuki Y."/>
            <person name="Nishikawa T."/>
            <person name="Otsuki T."/>
            <person name="Sugiyama T."/>
            <person name="Irie R."/>
            <person name="Wakamatsu A."/>
            <person name="Hayashi K."/>
            <person name="Sato H."/>
            <person name="Nagai K."/>
            <person name="Kimura K."/>
            <person name="Makita H."/>
            <person name="Sekine M."/>
            <person name="Obayashi M."/>
            <person name="Nishi T."/>
            <person name="Shibahara T."/>
            <person name="Tanaka T."/>
            <person name="Ishii S."/>
            <person name="Yamamoto J."/>
            <person name="Saito K."/>
            <person name="Kawai Y."/>
            <person name="Isono Y."/>
            <person name="Nakamura Y."/>
            <person name="Nagahari K."/>
            <person name="Murakami K."/>
            <person name="Yasuda T."/>
            <person name="Iwayanagi T."/>
            <person name="Wagatsuma M."/>
            <person name="Shiratori A."/>
            <person name="Sudo H."/>
            <person name="Hosoiri T."/>
            <person name="Kaku Y."/>
            <person name="Kodaira H."/>
            <person name="Kondo H."/>
            <person name="Sugawara M."/>
            <person name="Takahashi M."/>
            <person name="Kanda K."/>
            <person name="Yokoi T."/>
            <person name="Furuya T."/>
            <person name="Kikkawa E."/>
            <person name="Omura Y."/>
            <person name="Abe K."/>
            <person name="Kamihara K."/>
            <person name="Katsuta N."/>
            <person name="Sato K."/>
            <person name="Tanikawa M."/>
            <person name="Yamazaki M."/>
            <person name="Ninomiya K."/>
            <person name="Ishibashi T."/>
            <person name="Yamashita H."/>
            <person name="Murakawa K."/>
            <person name="Fujimori K."/>
            <person name="Tanai H."/>
            <person name="Kimata M."/>
            <person name="Watanabe M."/>
            <person name="Hiraoka S."/>
            <person name="Chiba Y."/>
            <person name="Ishida S."/>
            <person name="Ono Y."/>
            <person name="Takiguchi S."/>
            <person name="Watanabe S."/>
            <person name="Yosida M."/>
            <person name="Hotuta T."/>
            <person name="Kusano J."/>
            <person name="Kanehori K."/>
            <person name="Takahashi-Fujii A."/>
            <person name="Hara H."/>
            <person name="Tanase T.-O."/>
            <person name="Nomura Y."/>
            <person name="Togiya S."/>
            <person name="Komai F."/>
            <person name="Hara R."/>
            <person name="Takeuchi K."/>
            <person name="Arita M."/>
            <person name="Imose N."/>
            <person name="Musashino K."/>
            <person name="Yuuki H."/>
            <person name="Oshima A."/>
            <person name="Sasaki N."/>
            <person name="Aotsuka S."/>
            <person name="Yoshikawa Y."/>
            <person name="Matsunawa H."/>
            <person name="Ichihara T."/>
            <person name="Shiohata N."/>
            <person name="Sano S."/>
            <person name="Moriya S."/>
            <person name="Momiyama H."/>
            <person name="Satoh N."/>
            <person name="Takami S."/>
            <person name="Terashima Y."/>
            <person name="Suzuki O."/>
            <person name="Nakagawa S."/>
            <person name="Senoh A."/>
            <person name="Mizoguchi H."/>
            <person name="Goto Y."/>
            <person name="Shimizu F."/>
            <person name="Wakebe H."/>
            <person name="Hishigaki H."/>
            <person name="Watanabe T."/>
            <person name="Sugiyama A."/>
            <person name="Takemoto M."/>
            <person name="Kawakami B."/>
            <person name="Yamazaki M."/>
            <person name="Watanabe K."/>
            <person name="Kumagai A."/>
            <person name="Itakura S."/>
            <person name="Fukuzumi Y."/>
            <person name="Fujimori Y."/>
            <person name="Komiyama M."/>
            <person name="Tashiro H."/>
            <person name="Tanigami A."/>
            <person name="Fujiwara T."/>
            <person name="Ono T."/>
            <person name="Yamada K."/>
            <person name="Fujii Y."/>
            <person name="Ozaki K."/>
            <person name="Hirao M."/>
            <person name="Ohmori Y."/>
            <person name="Kawabata A."/>
            <person name="Hikiji T."/>
            <person name="Kobatake N."/>
            <person name="Inagaki H."/>
            <person name="Ikema Y."/>
            <person name="Okamoto S."/>
            <person name="Okitani R."/>
            <person name="Kawakami T."/>
            <person name="Noguchi S."/>
            <person name="Itoh T."/>
            <person name="Shigeta K."/>
            <person name="Senba T."/>
            <person name="Matsumura K."/>
            <person name="Nakajima Y."/>
            <person name="Mizuno T."/>
            <person name="Morinaga M."/>
            <person name="Sasaki M."/>
            <person name="Togashi T."/>
            <person name="Oyama M."/>
            <person name="Hata H."/>
            <person name="Watanabe M."/>
            <person name="Komatsu T."/>
            <person name="Mizushima-Sugano J."/>
            <person name="Satoh T."/>
            <person name="Shirai Y."/>
            <person name="Takahashi Y."/>
            <person name="Nakagawa K."/>
            <person name="Okumura K."/>
            <person name="Nagase T."/>
            <person name="Nomura N."/>
            <person name="Kikuchi H."/>
            <person name="Masuho Y."/>
            <person name="Yamashita R."/>
            <person name="Nakai K."/>
            <person name="Yada T."/>
            <person name="Nakamura Y."/>
            <person name="Ohara O."/>
            <person name="Isogai T."/>
            <person name="Sugano S."/>
        </authorList>
    </citation>
    <scope>NUCLEOTIDE SEQUENCE [LARGE SCALE MRNA] (ISOFORM 1)</scope>
    <source>
        <tissue>Eye</tissue>
    </source>
</reference>
<reference key="5">
    <citation type="submission" date="2005-09" db="EMBL/GenBank/DDBJ databases">
        <authorList>
            <person name="Mural R.J."/>
            <person name="Istrail S."/>
            <person name="Sutton G.G."/>
            <person name="Florea L."/>
            <person name="Halpern A.L."/>
            <person name="Mobarry C.M."/>
            <person name="Lippert R."/>
            <person name="Walenz B."/>
            <person name="Shatkay H."/>
            <person name="Dew I."/>
            <person name="Miller J.R."/>
            <person name="Flanigan M.J."/>
            <person name="Edwards N.J."/>
            <person name="Bolanos R."/>
            <person name="Fasulo D."/>
            <person name="Halldorsson B.V."/>
            <person name="Hannenhalli S."/>
            <person name="Turner R."/>
            <person name="Yooseph S."/>
            <person name="Lu F."/>
            <person name="Nusskern D.R."/>
            <person name="Shue B.C."/>
            <person name="Zheng X.H."/>
            <person name="Zhong F."/>
            <person name="Delcher A.L."/>
            <person name="Huson D.H."/>
            <person name="Kravitz S.A."/>
            <person name="Mouchard L."/>
            <person name="Reinert K."/>
            <person name="Remington K.A."/>
            <person name="Clark A.G."/>
            <person name="Waterman M.S."/>
            <person name="Eichler E.E."/>
            <person name="Adams M.D."/>
            <person name="Hunkapiller M.W."/>
            <person name="Myers E.W."/>
            <person name="Venter J.C."/>
        </authorList>
    </citation>
    <scope>NUCLEOTIDE SEQUENCE [LARGE SCALE GENOMIC DNA]</scope>
</reference>
<reference key="6">
    <citation type="journal article" date="2004" name="Genome Res.">
        <title>The status, quality, and expansion of the NIH full-length cDNA project: the Mammalian Gene Collection (MGC).</title>
        <authorList>
            <consortium name="The MGC Project Team"/>
        </authorList>
    </citation>
    <scope>NUCLEOTIDE SEQUENCE [LARGE SCALE MRNA] (ISOFORMS 1 AND 2)</scope>
    <source>
        <tissue>Eye</tissue>
        <tissue>Skin</tissue>
    </source>
</reference>
<reference key="7">
    <citation type="journal article" date="2002" name="J. Biol. Chem.">
        <title>Ancient ubiquitous protein 1 binds to the conserved membrane-proximal sequence of the cytoplasmic tail of the integrin alpha subunits that plays a crucial role in the inside-out signaling of alpha IIbbeta 3.</title>
        <authorList>
            <person name="Kato A."/>
            <person name="Kawamata N."/>
            <person name="Tamayose K."/>
            <person name="Egashira M."/>
            <person name="Miura R."/>
            <person name="Fujimura T."/>
            <person name="Murayama K."/>
            <person name="Oshimi K."/>
        </authorList>
    </citation>
    <scope>SUBCELLULAR LOCATION</scope>
    <scope>INTERACTION WITH ITGA2B; ITGA1; ITGA2; ITGA5; ITGAV AND ITGAM</scope>
    <scope>TISSUE SPECIFICITY</scope>
</reference>
<reference key="8">
    <citation type="journal article" date="2008" name="Mol. Cell">
        <title>Kinase-selective enrichment enables quantitative phosphoproteomics of the kinome across the cell cycle.</title>
        <authorList>
            <person name="Daub H."/>
            <person name="Olsen J.V."/>
            <person name="Bairlein M."/>
            <person name="Gnad F."/>
            <person name="Oppermann F.S."/>
            <person name="Korner R."/>
            <person name="Greff Z."/>
            <person name="Keri G."/>
            <person name="Stemmann O."/>
            <person name="Mann M."/>
        </authorList>
    </citation>
    <scope>PHOSPHORYLATION [LARGE SCALE ANALYSIS] AT SER-288 AND THR-367</scope>
    <scope>IDENTIFICATION BY MASS SPECTROMETRY [LARGE SCALE ANALYSIS]</scope>
    <source>
        <tissue>Cervix carcinoma</tissue>
    </source>
</reference>
<reference key="9">
    <citation type="journal article" date="2008" name="Proc. Natl. Acad. Sci. U.S.A.">
        <title>A quantitative atlas of mitotic phosphorylation.</title>
        <authorList>
            <person name="Dephoure N."/>
            <person name="Zhou C."/>
            <person name="Villen J."/>
            <person name="Beausoleil S.A."/>
            <person name="Bakalarski C.E."/>
            <person name="Elledge S.J."/>
            <person name="Gygi S.P."/>
        </authorList>
    </citation>
    <scope>PHOSPHORYLATION [LARGE SCALE ANALYSIS] AT SER-288; SER-292; SER-363 AND THR-367</scope>
    <scope>IDENTIFICATION BY MASS SPECTROMETRY [LARGE SCALE ANALYSIS]</scope>
    <source>
        <tissue>Cervix carcinoma</tissue>
    </source>
</reference>
<reference key="10">
    <citation type="journal article" date="2008" name="Proc. Natl. Acad. Sci. U.S.A.">
        <title>SEL1L nucleates a protein complex required for dislocation of misfolded glycoproteins.</title>
        <authorList>
            <person name="Mueller B."/>
            <person name="Klemm E.J."/>
            <person name="Spooner E."/>
            <person name="Claessen J.H."/>
            <person name="Ploegh H.L."/>
        </authorList>
    </citation>
    <scope>IDENTIFICATION IN A COMPLEX WITH SEL1L</scope>
    <scope>SUBCELLULAR LOCATION</scope>
    <scope>FUNCTION</scope>
</reference>
<reference key="11">
    <citation type="journal article" date="2009" name="Anal. Chem.">
        <title>Lys-N and trypsin cover complementary parts of the phosphoproteome in a refined SCX-based approach.</title>
        <authorList>
            <person name="Gauci S."/>
            <person name="Helbig A.O."/>
            <person name="Slijper M."/>
            <person name="Krijgsveld J."/>
            <person name="Heck A.J."/>
            <person name="Mohammed S."/>
        </authorList>
    </citation>
    <scope>IDENTIFICATION BY MASS SPECTROMETRY [LARGE SCALE ANALYSIS]</scope>
</reference>
<reference key="12">
    <citation type="journal article" date="2010" name="Sci. Signal.">
        <title>Quantitative phosphoproteomics reveals widespread full phosphorylation site occupancy during mitosis.</title>
        <authorList>
            <person name="Olsen J.V."/>
            <person name="Vermeulen M."/>
            <person name="Santamaria A."/>
            <person name="Kumar C."/>
            <person name="Miller M.L."/>
            <person name="Jensen L.J."/>
            <person name="Gnad F."/>
            <person name="Cox J."/>
            <person name="Jensen T.S."/>
            <person name="Nigg E.A."/>
            <person name="Brunak S."/>
            <person name="Mann M."/>
        </authorList>
    </citation>
    <scope>PHOSPHORYLATION [LARGE SCALE ANALYSIS] AT SER-288</scope>
    <scope>IDENTIFICATION BY MASS SPECTROMETRY [LARGE SCALE ANALYSIS]</scope>
    <source>
        <tissue>Cervix carcinoma</tissue>
    </source>
</reference>
<reference key="13">
    <citation type="journal article" date="2011" name="BMC Syst. Biol.">
        <title>Initial characterization of the human central proteome.</title>
        <authorList>
            <person name="Burkard T.R."/>
            <person name="Planyavsky M."/>
            <person name="Kaupe I."/>
            <person name="Breitwieser F.P."/>
            <person name="Buerckstuemmer T."/>
            <person name="Bennett K.L."/>
            <person name="Superti-Furga G."/>
            <person name="Colinge J."/>
        </authorList>
    </citation>
    <scope>IDENTIFICATION BY MASS SPECTROMETRY [LARGE SCALE ANALYSIS]</scope>
</reference>
<reference key="14">
    <citation type="journal article" date="2011" name="J. Biol. Chem.">
        <title>Ancient ubiquitous protein 1 (AUP1) localizes to lipid droplets and binds the E2 ubiquitin conjugase G2 (Ube2g2) via its G2 binding region.</title>
        <authorList>
            <person name="Spandl J."/>
            <person name="Lohmann D."/>
            <person name="Kuerschner L."/>
            <person name="Moessinger C."/>
            <person name="Thiele C."/>
        </authorList>
    </citation>
    <scope>FUNCTION</scope>
    <scope>INTERACTION WITH UBE2G2</scope>
    <scope>SUBCELLULAR LOCATION</scope>
    <scope>TOPOLOGY</scope>
    <scope>MUTAGENESIS OF 397-ALA--THR-402</scope>
</reference>
<reference key="15">
    <citation type="journal article" date="2011" name="J. Biol. Chem.">
        <title>Dual role of ancient ubiquitous protein 1 (AUP1) in lipid droplet accumulation and endoplasmic reticulum (ER) protein quality control.</title>
        <authorList>
            <person name="Klemm E.J."/>
            <person name="Spooner E."/>
            <person name="Ploegh H.L."/>
        </authorList>
    </citation>
    <scope>FUNCTION</scope>
    <scope>INTERACTION WITH UBE2G2</scope>
    <scope>SUBCELLULAR LOCATION</scope>
    <scope>DOMAIN</scope>
    <scope>UBIQUITINATION</scope>
    <scope>MUTAGENESIS OF HIS-96; 306-GLU--LEU-308 AND 333-LEU-LEU-334</scope>
</reference>
<reference key="16">
    <citation type="journal article" date="2012" name="Mol. Cell. Proteomics">
        <title>Comparative large-scale characterisation of plant vs. mammal proteins reveals similar and idiosyncratic N-alpha acetylation features.</title>
        <authorList>
            <person name="Bienvenut W.V."/>
            <person name="Sumpton D."/>
            <person name="Martinez A."/>
            <person name="Lilla S."/>
            <person name="Espagne C."/>
            <person name="Meinnel T."/>
            <person name="Giglione C."/>
        </authorList>
    </citation>
    <scope>ACETYLATION [LARGE SCALE ANALYSIS] AT MET-1</scope>
    <scope>IDENTIFICATION BY MASS SPECTROMETRY [LARGE SCALE ANALYSIS]</scope>
</reference>
<reference key="17">
    <citation type="journal article" date="2012" name="Proc. Natl. Acad. Sci. U.S.A.">
        <title>N-terminal acetylome analyses and functional insights of the N-terminal acetyltransferase NatB.</title>
        <authorList>
            <person name="Van Damme P."/>
            <person name="Lasa M."/>
            <person name="Polevoda B."/>
            <person name="Gazquez C."/>
            <person name="Elosegui-Artola A."/>
            <person name="Kim D.S."/>
            <person name="De Juan-Pardo E."/>
            <person name="Demeyer K."/>
            <person name="Hole K."/>
            <person name="Larrea E."/>
            <person name="Timmerman E."/>
            <person name="Prieto J."/>
            <person name="Arnesen T."/>
            <person name="Sherman F."/>
            <person name="Gevaert K."/>
            <person name="Aldabe R."/>
        </authorList>
    </citation>
    <scope>ACETYLATION [LARGE SCALE ANALYSIS] AT MET-1</scope>
    <scope>IDENTIFICATION BY MASS SPECTROMETRY [LARGE SCALE ANALYSIS]</scope>
</reference>
<reference key="18">
    <citation type="journal article" date="2013" name="J. Lipid Res.">
        <title>Monotopic topology is required for lipid droplet targeting of ancient ubiquitous protein 1.</title>
        <authorList>
            <person name="Stevanovic A."/>
            <person name="Thiele C."/>
        </authorList>
    </citation>
    <scope>SUBCELLULAR LOCATION</scope>
    <scope>TOPOLOGY</scope>
    <scope>MUTAGENESIS OF 33-PRO--GLY-35; ARG-42; ASP-58 AND 62-ARG-ARG-63</scope>
</reference>
<reference key="19">
    <citation type="journal article" date="2013" name="J. Proteome Res.">
        <title>Toward a comprehensive characterization of a human cancer cell phosphoproteome.</title>
        <authorList>
            <person name="Zhou H."/>
            <person name="Di Palma S."/>
            <person name="Preisinger C."/>
            <person name="Peng M."/>
            <person name="Polat A.N."/>
            <person name="Heck A.J."/>
            <person name="Mohammed S."/>
        </authorList>
    </citation>
    <scope>PHOSPHORYLATION [LARGE SCALE ANALYSIS] AT SER-5; SER-288 AND THR-367</scope>
    <scope>IDENTIFICATION BY MASS SPECTROMETRY [LARGE SCALE ANALYSIS]</scope>
    <source>
        <tissue>Erythroleukemia</tissue>
    </source>
</reference>
<reference key="20">
    <citation type="journal article" date="2013" name="Mol. Biol. Cell">
        <title>Ancient ubiquitous protein-1 mediates sterol-induced ubiquitination of 3-hydroxy-3-methylglutaryl CoA reductase in lipid droplet-associated endoplasmic reticulum membranes.</title>
        <authorList>
            <person name="Jo Y."/>
            <person name="Hartman I.Z."/>
            <person name="DeBose-Boyd R.A."/>
        </authorList>
    </citation>
    <scope>FUNCTION</scope>
    <scope>INTERACTION WITH AMFR; RNF139 AND UBE2G2</scope>
    <scope>SUBCELLULAR LOCATION</scope>
    <scope>DOMAIN</scope>
    <scope>MUTAGENESIS OF ARG-382; GLN-383; GLU-384; LEU-386; GLU-388; ARG-389; LYS-390; LEU-393; ARG-398; ARG-399; ARG-400; ARG-404; GLU-408 AND ASP-410</scope>
</reference>
<reference key="21">
    <citation type="journal article" date="2013" name="PLoS ONE">
        <title>Monoubiquitination of ancient ubiquitous protein 1 promotes lipid droplet clustering.</title>
        <authorList>
            <person name="Lohmann D."/>
            <person name="Spandl J."/>
            <person name="Stevanovic A."/>
            <person name="Schoene M."/>
            <person name="Philippou-Massier J."/>
            <person name="Thiele C."/>
        </authorList>
    </citation>
    <scope>FUNCTION</scope>
    <scope>DOMAIN</scope>
    <scope>UBIQUITINATION</scope>
    <scope>MUTAGENESIS OF 33-PRO--GLY-35; 307-VAL--PRO-309; ILE-316; 319-ASP-LEU-320; 329-THR-ILE-330 AND 333-LEU-LEU-334</scope>
</reference>
<reference key="22">
    <citation type="journal article" date="2017" name="Arterioscler. Thromb. Vasc. Biol.">
        <title>AUP1 (Ancient Ubiquitous Protein 1) Is a Key Determinant of Hepatic Very-Low-Density Lipoprotein Assembly and Secretion.</title>
        <authorList>
            <person name="Zhang J."/>
            <person name="Zamani M."/>
            <person name="Thiele C."/>
            <person name="Taher J."/>
            <person name="Amir Alipour M."/>
            <person name="Yao Z."/>
            <person name="Adeli K."/>
        </authorList>
    </citation>
    <scope>FUNCTION</scope>
    <scope>INTERACTION WITH APOB</scope>
    <scope>SUBCELLULAR LOCATION</scope>
</reference>
<reference key="23">
    <citation type="journal article" date="2018" name="Cell Host Microbe">
        <title>Flaviviruses Exploit the Lipid Droplet Protein AUP1 to Trigger Lipophagy and Drive Virus Production.</title>
        <authorList>
            <person name="Zhang J."/>
            <person name="Lan Y."/>
            <person name="Li M.Y."/>
            <person name="Lamers M.M."/>
            <person name="Fusade-Boyer M."/>
            <person name="Klemm E."/>
            <person name="Thiele C."/>
            <person name="Ashour J."/>
            <person name="Sanyal S."/>
        </authorList>
    </citation>
    <scope>FUNCTION (MICROBIAL INFECTION)</scope>
    <scope>INTERACTION WITH DENV NS4A</scope>
    <scope>SUBCELLULAR LOCATION</scope>
    <scope>INDUCTION (MICROBIAL INFECTION)</scope>
    <scope>UBIQUITINATION</scope>
    <scope>IDENTIFICATION BY MASS SPECTROMETRY</scope>
</reference>
<reference key="24">
    <citation type="submission" date="2007-09" db="PDB data bank">
        <title>Solution structure of RSGI RUH-075, a human CUE domain.</title>
        <authorList>
            <consortium name="RIKEN structural genomics initiative (RSGI)"/>
        </authorList>
    </citation>
    <scope>STRUCTURE BY NMR OF 292-345</scope>
</reference>
<protein>
    <recommendedName>
        <fullName evidence="16">Lipid droplet-regulating VLDL assembly factor AUP1</fullName>
    </recommendedName>
    <alternativeName>
        <fullName evidence="12">Ancient ubiquitous protein 1</fullName>
    </alternativeName>
</protein>
<organism>
    <name type="scientific">Homo sapiens</name>
    <name type="common">Human</name>
    <dbReference type="NCBI Taxonomy" id="9606"/>
    <lineage>
        <taxon>Eukaryota</taxon>
        <taxon>Metazoa</taxon>
        <taxon>Chordata</taxon>
        <taxon>Craniata</taxon>
        <taxon>Vertebrata</taxon>
        <taxon>Euteleostomi</taxon>
        <taxon>Mammalia</taxon>
        <taxon>Eutheria</taxon>
        <taxon>Euarchontoglires</taxon>
        <taxon>Primates</taxon>
        <taxon>Haplorrhini</taxon>
        <taxon>Catarrhini</taxon>
        <taxon>Hominidae</taxon>
        <taxon>Homo</taxon>
    </lineage>
</organism>